<sequence>MLDLFKAIGLGLVVLLPLANPLTTVALFLGLAGNMNSAERNRQSLMASVYVFAIMMVAYYAGQLVMDTFGISIPGLRIAGGLIVAFIGFRMLFPQQKAIDSPEAKSKSEELEDEPSANIAFVPLAMPSTAGPGTIAMIISSASTVRQSSTFADWVLMVAPPLIFFLVAVILWGSLRSSGAIMRLVGKGGIEAISRLMGFLLVCMGVQFIINGILEIIKTYH</sequence>
<comment type="subcellular location">
    <subcellularLocation>
        <location evidence="1">Cell inner membrane</location>
        <topology evidence="1">Multi-pass membrane protein</topology>
    </subcellularLocation>
</comment>
<comment type="similarity">
    <text evidence="3">Belongs to the UPF0056 (MarC) family.</text>
</comment>
<evidence type="ECO:0000250" key="1"/>
<evidence type="ECO:0000255" key="2"/>
<evidence type="ECO:0000305" key="3"/>
<accession>Q320K3</accession>
<protein>
    <recommendedName>
        <fullName>UPF0056 inner membrane protein MarC</fullName>
    </recommendedName>
</protein>
<organism>
    <name type="scientific">Shigella boydii serotype 4 (strain Sb227)</name>
    <dbReference type="NCBI Taxonomy" id="300268"/>
    <lineage>
        <taxon>Bacteria</taxon>
        <taxon>Pseudomonadati</taxon>
        <taxon>Pseudomonadota</taxon>
        <taxon>Gammaproteobacteria</taxon>
        <taxon>Enterobacterales</taxon>
        <taxon>Enterobacteriaceae</taxon>
        <taxon>Shigella</taxon>
    </lineage>
</organism>
<keyword id="KW-0997">Cell inner membrane</keyword>
<keyword id="KW-1003">Cell membrane</keyword>
<keyword id="KW-0472">Membrane</keyword>
<keyword id="KW-0812">Transmembrane</keyword>
<keyword id="KW-1133">Transmembrane helix</keyword>
<gene>
    <name type="primary">marC</name>
    <name type="ordered locus">SBO_1647</name>
</gene>
<dbReference type="EMBL" id="CP000036">
    <property type="protein sequence ID" value="ABB66255.1"/>
    <property type="molecule type" value="Genomic_DNA"/>
</dbReference>
<dbReference type="RefSeq" id="WP_000885033.1">
    <property type="nucleotide sequence ID" value="NC_007613.1"/>
</dbReference>
<dbReference type="GeneID" id="93775693"/>
<dbReference type="KEGG" id="sbo:SBO_1647"/>
<dbReference type="HOGENOM" id="CLU_079909_2_0_6"/>
<dbReference type="Proteomes" id="UP000007067">
    <property type="component" value="Chromosome"/>
</dbReference>
<dbReference type="GO" id="GO:0005886">
    <property type="term" value="C:plasma membrane"/>
    <property type="evidence" value="ECO:0007669"/>
    <property type="project" value="UniProtKB-SubCell"/>
</dbReference>
<dbReference type="InterPro" id="IPR002771">
    <property type="entry name" value="Multi_antbiot-R_MarC"/>
</dbReference>
<dbReference type="NCBIfam" id="TIGR00427">
    <property type="entry name" value="NAAT family transporter"/>
    <property type="match status" value="1"/>
</dbReference>
<dbReference type="NCBIfam" id="NF008228">
    <property type="entry name" value="PRK10995.1"/>
    <property type="match status" value="1"/>
</dbReference>
<dbReference type="PANTHER" id="PTHR33508:SF2">
    <property type="entry name" value="UPF0056 INNER MEMBRANE PROTEIN MARC"/>
    <property type="match status" value="1"/>
</dbReference>
<dbReference type="PANTHER" id="PTHR33508">
    <property type="entry name" value="UPF0056 MEMBRANE PROTEIN YHCE"/>
    <property type="match status" value="1"/>
</dbReference>
<dbReference type="Pfam" id="PF01914">
    <property type="entry name" value="MarC"/>
    <property type="match status" value="1"/>
</dbReference>
<feature type="chain" id="PRO_0000343826" description="UPF0056 inner membrane protein MarC">
    <location>
        <begin position="1"/>
        <end position="221"/>
    </location>
</feature>
<feature type="topological domain" description="Periplasmic" evidence="2">
    <location>
        <begin position="1"/>
        <end position="7"/>
    </location>
</feature>
<feature type="transmembrane region" description="Helical" evidence="2">
    <location>
        <begin position="8"/>
        <end position="28"/>
    </location>
</feature>
<feature type="topological domain" description="Cytoplasmic" evidence="2">
    <location>
        <begin position="29"/>
        <end position="44"/>
    </location>
</feature>
<feature type="transmembrane region" description="Helical" evidence="2">
    <location>
        <begin position="45"/>
        <end position="65"/>
    </location>
</feature>
<feature type="topological domain" description="Periplasmic" evidence="2">
    <location>
        <begin position="66"/>
        <end position="68"/>
    </location>
</feature>
<feature type="transmembrane region" description="Helical" evidence="2">
    <location>
        <begin position="69"/>
        <end position="89"/>
    </location>
</feature>
<feature type="topological domain" description="Cytoplasmic" evidence="2">
    <location>
        <begin position="90"/>
        <end position="118"/>
    </location>
</feature>
<feature type="transmembrane region" description="Helical" evidence="2">
    <location>
        <begin position="119"/>
        <end position="139"/>
    </location>
</feature>
<feature type="topological domain" description="Periplasmic" evidence="2">
    <location>
        <begin position="140"/>
        <end position="154"/>
    </location>
</feature>
<feature type="transmembrane region" description="Helical" evidence="2">
    <location>
        <begin position="155"/>
        <end position="175"/>
    </location>
</feature>
<feature type="topological domain" description="Cytoplasmic" evidence="2">
    <location>
        <begin position="176"/>
        <end position="196"/>
    </location>
</feature>
<feature type="transmembrane region" description="Helical" evidence="2">
    <location>
        <begin position="197"/>
        <end position="217"/>
    </location>
</feature>
<feature type="topological domain" description="Periplasmic" evidence="2">
    <location>
        <begin position="218"/>
        <end position="221"/>
    </location>
</feature>
<name>MARC_SHIBS</name>
<reference key="1">
    <citation type="journal article" date="2005" name="Nucleic Acids Res.">
        <title>Genome dynamics and diversity of Shigella species, the etiologic agents of bacillary dysentery.</title>
        <authorList>
            <person name="Yang F."/>
            <person name="Yang J."/>
            <person name="Zhang X."/>
            <person name="Chen L."/>
            <person name="Jiang Y."/>
            <person name="Yan Y."/>
            <person name="Tang X."/>
            <person name="Wang J."/>
            <person name="Xiong Z."/>
            <person name="Dong J."/>
            <person name="Xue Y."/>
            <person name="Zhu Y."/>
            <person name="Xu X."/>
            <person name="Sun L."/>
            <person name="Chen S."/>
            <person name="Nie H."/>
            <person name="Peng J."/>
            <person name="Xu J."/>
            <person name="Wang Y."/>
            <person name="Yuan Z."/>
            <person name="Wen Y."/>
            <person name="Yao Z."/>
            <person name="Shen Y."/>
            <person name="Qiang B."/>
            <person name="Hou Y."/>
            <person name="Yu J."/>
            <person name="Jin Q."/>
        </authorList>
    </citation>
    <scope>NUCLEOTIDE SEQUENCE [LARGE SCALE GENOMIC DNA]</scope>
    <source>
        <strain>Sb227</strain>
    </source>
</reference>
<proteinExistence type="inferred from homology"/>